<organism>
    <name type="scientific">Synechococcus sp. (strain WH7803)</name>
    <dbReference type="NCBI Taxonomy" id="32051"/>
    <lineage>
        <taxon>Bacteria</taxon>
        <taxon>Bacillati</taxon>
        <taxon>Cyanobacteriota</taxon>
        <taxon>Cyanophyceae</taxon>
        <taxon>Synechococcales</taxon>
        <taxon>Synechococcaceae</taxon>
        <taxon>Synechococcus</taxon>
    </lineage>
</organism>
<comment type="function">
    <text evidence="1">Specifically methylates the N4 position of cytidine in position 1402 (C1402) of 16S rRNA.</text>
</comment>
<comment type="catalytic activity">
    <reaction evidence="1">
        <text>cytidine(1402) in 16S rRNA + S-adenosyl-L-methionine = N(4)-methylcytidine(1402) in 16S rRNA + S-adenosyl-L-homocysteine + H(+)</text>
        <dbReference type="Rhea" id="RHEA:42928"/>
        <dbReference type="Rhea" id="RHEA-COMP:10286"/>
        <dbReference type="Rhea" id="RHEA-COMP:10287"/>
        <dbReference type="ChEBI" id="CHEBI:15378"/>
        <dbReference type="ChEBI" id="CHEBI:57856"/>
        <dbReference type="ChEBI" id="CHEBI:59789"/>
        <dbReference type="ChEBI" id="CHEBI:74506"/>
        <dbReference type="ChEBI" id="CHEBI:82748"/>
        <dbReference type="EC" id="2.1.1.199"/>
    </reaction>
</comment>
<comment type="subcellular location">
    <subcellularLocation>
        <location evidence="1">Cytoplasm</location>
    </subcellularLocation>
</comment>
<comment type="similarity">
    <text evidence="1">Belongs to the methyltransferase superfamily. RsmH family.</text>
</comment>
<protein>
    <recommendedName>
        <fullName evidence="1">Ribosomal RNA small subunit methyltransferase H</fullName>
        <ecNumber evidence="1">2.1.1.199</ecNumber>
    </recommendedName>
    <alternativeName>
        <fullName evidence="1">16S rRNA m(4)C1402 methyltransferase</fullName>
    </alternativeName>
    <alternativeName>
        <fullName evidence="1">rRNA (cytosine-N(4)-)-methyltransferase RsmH</fullName>
    </alternativeName>
</protein>
<keyword id="KW-0963">Cytoplasm</keyword>
<keyword id="KW-0489">Methyltransferase</keyword>
<keyword id="KW-1185">Reference proteome</keyword>
<keyword id="KW-0698">rRNA processing</keyword>
<keyword id="KW-0949">S-adenosyl-L-methionine</keyword>
<keyword id="KW-0808">Transferase</keyword>
<gene>
    <name evidence="1" type="primary">rsmH</name>
    <name type="synonym">mraW</name>
    <name type="ordered locus">SynWH7803_2313</name>
</gene>
<evidence type="ECO:0000255" key="1">
    <source>
        <dbReference type="HAMAP-Rule" id="MF_01007"/>
    </source>
</evidence>
<evidence type="ECO:0000256" key="2">
    <source>
        <dbReference type="SAM" id="MobiDB-lite"/>
    </source>
</evidence>
<accession>A5GP74</accession>
<name>RSMH_SYNPW</name>
<dbReference type="EC" id="2.1.1.199" evidence="1"/>
<dbReference type="EMBL" id="CT971583">
    <property type="protein sequence ID" value="CAK24739.1"/>
    <property type="molecule type" value="Genomic_DNA"/>
</dbReference>
<dbReference type="SMR" id="A5GP74"/>
<dbReference type="STRING" id="32051.SynWH7803_2313"/>
<dbReference type="KEGG" id="syx:SynWH7803_2313"/>
<dbReference type="eggNOG" id="COG0275">
    <property type="taxonomic scope" value="Bacteria"/>
</dbReference>
<dbReference type="HOGENOM" id="CLU_038422_3_0_3"/>
<dbReference type="OrthoDB" id="9806637at2"/>
<dbReference type="Proteomes" id="UP000001566">
    <property type="component" value="Chromosome"/>
</dbReference>
<dbReference type="GO" id="GO:0005737">
    <property type="term" value="C:cytoplasm"/>
    <property type="evidence" value="ECO:0007669"/>
    <property type="project" value="UniProtKB-SubCell"/>
</dbReference>
<dbReference type="GO" id="GO:0071424">
    <property type="term" value="F:rRNA (cytosine-N4-)-methyltransferase activity"/>
    <property type="evidence" value="ECO:0007669"/>
    <property type="project" value="UniProtKB-UniRule"/>
</dbReference>
<dbReference type="GO" id="GO:0070475">
    <property type="term" value="P:rRNA base methylation"/>
    <property type="evidence" value="ECO:0007669"/>
    <property type="project" value="UniProtKB-UniRule"/>
</dbReference>
<dbReference type="Gene3D" id="1.10.150.170">
    <property type="entry name" value="Putative methyltransferase TM0872, insert domain"/>
    <property type="match status" value="1"/>
</dbReference>
<dbReference type="Gene3D" id="3.40.50.150">
    <property type="entry name" value="Vaccinia Virus protein VP39"/>
    <property type="match status" value="1"/>
</dbReference>
<dbReference type="HAMAP" id="MF_01007">
    <property type="entry name" value="16SrRNA_methyltr_H"/>
    <property type="match status" value="1"/>
</dbReference>
<dbReference type="InterPro" id="IPR002903">
    <property type="entry name" value="RsmH"/>
</dbReference>
<dbReference type="InterPro" id="IPR023397">
    <property type="entry name" value="SAM-dep_MeTrfase_MraW_recog"/>
</dbReference>
<dbReference type="InterPro" id="IPR029063">
    <property type="entry name" value="SAM-dependent_MTases_sf"/>
</dbReference>
<dbReference type="NCBIfam" id="TIGR00006">
    <property type="entry name" value="16S rRNA (cytosine(1402)-N(4))-methyltransferase RsmH"/>
    <property type="match status" value="1"/>
</dbReference>
<dbReference type="PANTHER" id="PTHR11265:SF0">
    <property type="entry name" value="12S RRNA N4-METHYLCYTIDINE METHYLTRANSFERASE"/>
    <property type="match status" value="1"/>
</dbReference>
<dbReference type="PANTHER" id="PTHR11265">
    <property type="entry name" value="S-ADENOSYL-METHYLTRANSFERASE MRAW"/>
    <property type="match status" value="1"/>
</dbReference>
<dbReference type="Pfam" id="PF01795">
    <property type="entry name" value="Methyltransf_5"/>
    <property type="match status" value="1"/>
</dbReference>
<dbReference type="PIRSF" id="PIRSF004486">
    <property type="entry name" value="MraW"/>
    <property type="match status" value="1"/>
</dbReference>
<dbReference type="SUPFAM" id="SSF81799">
    <property type="entry name" value="Putative methyltransferase TM0872, insert domain"/>
    <property type="match status" value="1"/>
</dbReference>
<dbReference type="SUPFAM" id="SSF53335">
    <property type="entry name" value="S-adenosyl-L-methionine-dependent methyltransferases"/>
    <property type="match status" value="1"/>
</dbReference>
<sequence>MPDQLPATDSTFRHVPVLADVLLNALDEEPSVHWQSGLVVDATLGGGGHSSLLLDRYPDLRLIGLDQDPTARAAAATRLSPWKERVSIVATNFADYSPPQSASLVLADLGVSSPQLDVAARGFSFRLDGPLDMRMNPESDGETAGELIERMEESDLADLIYAYGEERLSRRIARRIKADLAAQGPYAGTASFAYAVAGCYPPKARRGRIHPATRTFQALRIAVNDELGVLDQLLSSAPGWLQPGGLLAIISFHSLEDRRVKTAFLQDERLDRITRRPLVASAEEQERNPRSRSAKLRIARKRSES</sequence>
<reference key="1">
    <citation type="submission" date="2006-05" db="EMBL/GenBank/DDBJ databases">
        <authorList>
            <consortium name="Genoscope"/>
        </authorList>
    </citation>
    <scope>NUCLEOTIDE SEQUENCE [LARGE SCALE GENOMIC DNA]</scope>
    <source>
        <strain>WH7803</strain>
    </source>
</reference>
<proteinExistence type="inferred from homology"/>
<feature type="chain" id="PRO_0000387184" description="Ribosomal RNA small subunit methyltransferase H">
    <location>
        <begin position="1"/>
        <end position="305"/>
    </location>
</feature>
<feature type="region of interest" description="Disordered" evidence="2">
    <location>
        <begin position="280"/>
        <end position="305"/>
    </location>
</feature>
<feature type="compositionally biased region" description="Basic residues" evidence="2">
    <location>
        <begin position="290"/>
        <end position="305"/>
    </location>
</feature>
<feature type="binding site" evidence="1">
    <location>
        <begin position="47"/>
        <end position="49"/>
    </location>
    <ligand>
        <name>S-adenosyl-L-methionine</name>
        <dbReference type="ChEBI" id="CHEBI:59789"/>
    </ligand>
</feature>
<feature type="binding site" evidence="1">
    <location>
        <position position="66"/>
    </location>
    <ligand>
        <name>S-adenosyl-L-methionine</name>
        <dbReference type="ChEBI" id="CHEBI:59789"/>
    </ligand>
</feature>
<feature type="binding site" evidence="1">
    <location>
        <position position="93"/>
    </location>
    <ligand>
        <name>S-adenosyl-L-methionine</name>
        <dbReference type="ChEBI" id="CHEBI:59789"/>
    </ligand>
</feature>
<feature type="binding site" evidence="1">
    <location>
        <position position="108"/>
    </location>
    <ligand>
        <name>S-adenosyl-L-methionine</name>
        <dbReference type="ChEBI" id="CHEBI:59789"/>
    </ligand>
</feature>
<feature type="binding site" evidence="1">
    <location>
        <position position="115"/>
    </location>
    <ligand>
        <name>S-adenosyl-L-methionine</name>
        <dbReference type="ChEBI" id="CHEBI:59789"/>
    </ligand>
</feature>